<organism>
    <name type="scientific">Coxiella burnetii (strain RSA 493 / Nine Mile phase I)</name>
    <dbReference type="NCBI Taxonomy" id="227377"/>
    <lineage>
        <taxon>Bacteria</taxon>
        <taxon>Pseudomonadati</taxon>
        <taxon>Pseudomonadota</taxon>
        <taxon>Gammaproteobacteria</taxon>
        <taxon>Legionellales</taxon>
        <taxon>Coxiellaceae</taxon>
        <taxon>Coxiella</taxon>
    </lineage>
</organism>
<feature type="chain" id="PRO_0000311474" description="Iron-sulfur cluster insertion protein ErpA">
    <location>
        <begin position="1"/>
        <end position="134"/>
    </location>
</feature>
<feature type="binding site" evidence="1">
    <location>
        <position position="47"/>
    </location>
    <ligand>
        <name>iron-sulfur cluster</name>
        <dbReference type="ChEBI" id="CHEBI:30408"/>
    </ligand>
</feature>
<feature type="binding site" evidence="1">
    <location>
        <position position="126"/>
    </location>
    <ligand>
        <name>iron-sulfur cluster</name>
        <dbReference type="ChEBI" id="CHEBI:30408"/>
    </ligand>
</feature>
<feature type="binding site" evidence="1">
    <location>
        <position position="128"/>
    </location>
    <ligand>
        <name>iron-sulfur cluster</name>
        <dbReference type="ChEBI" id="CHEBI:30408"/>
    </ligand>
</feature>
<reference key="1">
    <citation type="journal article" date="2003" name="Proc. Natl. Acad. Sci. U.S.A.">
        <title>Complete genome sequence of the Q-fever pathogen, Coxiella burnetii.</title>
        <authorList>
            <person name="Seshadri R."/>
            <person name="Paulsen I.T."/>
            <person name="Eisen J.A."/>
            <person name="Read T.D."/>
            <person name="Nelson K.E."/>
            <person name="Nelson W.C."/>
            <person name="Ward N.L."/>
            <person name="Tettelin H."/>
            <person name="Davidsen T.M."/>
            <person name="Beanan M.J."/>
            <person name="DeBoy R.T."/>
            <person name="Daugherty S.C."/>
            <person name="Brinkac L.M."/>
            <person name="Madupu R."/>
            <person name="Dodson R.J."/>
            <person name="Khouri H.M."/>
            <person name="Lee K.H."/>
            <person name="Carty H.A."/>
            <person name="Scanlan D."/>
            <person name="Heinzen R.A."/>
            <person name="Thompson H.A."/>
            <person name="Samuel J.E."/>
            <person name="Fraser C.M."/>
            <person name="Heidelberg J.F."/>
        </authorList>
    </citation>
    <scope>NUCLEOTIDE SEQUENCE [LARGE SCALE GENOMIC DNA]</scope>
    <source>
        <strain>RSA 493 / Nine Mile phase I</strain>
    </source>
</reference>
<evidence type="ECO:0000255" key="1">
    <source>
        <dbReference type="HAMAP-Rule" id="MF_01380"/>
    </source>
</evidence>
<evidence type="ECO:0000305" key="2"/>
<name>ERPA_COXBU</name>
<keyword id="KW-0408">Iron</keyword>
<keyword id="KW-0411">Iron-sulfur</keyword>
<keyword id="KW-0479">Metal-binding</keyword>
<keyword id="KW-1185">Reference proteome</keyword>
<comment type="function">
    <text evidence="1">Required for insertion of 4Fe-4S clusters for at least IspG.</text>
</comment>
<comment type="cofactor">
    <cofactor evidence="1">
        <name>iron-sulfur cluster</name>
        <dbReference type="ChEBI" id="CHEBI:30408"/>
    </cofactor>
    <text evidence="1">Binds 1 iron-sulfur cluster per subunit.</text>
</comment>
<comment type="subunit">
    <text evidence="1">Homodimer.</text>
</comment>
<comment type="similarity">
    <text evidence="1">Belongs to the HesB/IscA family.</text>
</comment>
<comment type="sequence caution" evidence="2">
    <conflict type="erroneous initiation">
        <sequence resource="EMBL-CDS" id="AAO91369"/>
    </conflict>
</comment>
<accession>Q83AK7</accession>
<dbReference type="EMBL" id="AE016828">
    <property type="protein sequence ID" value="AAO91369.1"/>
    <property type="status" value="ALT_INIT"/>
    <property type="molecule type" value="Genomic_DNA"/>
</dbReference>
<dbReference type="RefSeq" id="NP_820855.1">
    <property type="nucleotide sequence ID" value="NC_002971.3"/>
</dbReference>
<dbReference type="SMR" id="Q83AK7"/>
<dbReference type="STRING" id="227377.CBU_1878"/>
<dbReference type="EnsemblBacteria" id="AAO91369">
    <property type="protein sequence ID" value="AAO91369"/>
    <property type="gene ID" value="CBU_1878"/>
</dbReference>
<dbReference type="GeneID" id="1209791"/>
<dbReference type="KEGG" id="cbu:CBU_1878"/>
<dbReference type="PATRIC" id="fig|227377.7.peg.1860"/>
<dbReference type="eggNOG" id="COG0316">
    <property type="taxonomic scope" value="Bacteria"/>
</dbReference>
<dbReference type="HOGENOM" id="CLU_069054_5_3_6"/>
<dbReference type="OrthoDB" id="9801228at2"/>
<dbReference type="Proteomes" id="UP000002671">
    <property type="component" value="Chromosome"/>
</dbReference>
<dbReference type="GO" id="GO:0005829">
    <property type="term" value="C:cytosol"/>
    <property type="evidence" value="ECO:0000318"/>
    <property type="project" value="GO_Central"/>
</dbReference>
<dbReference type="GO" id="GO:0051537">
    <property type="term" value="F:2 iron, 2 sulfur cluster binding"/>
    <property type="evidence" value="ECO:0000318"/>
    <property type="project" value="GO_Central"/>
</dbReference>
<dbReference type="GO" id="GO:0051539">
    <property type="term" value="F:4 iron, 4 sulfur cluster binding"/>
    <property type="evidence" value="ECO:0000318"/>
    <property type="project" value="GO_Central"/>
</dbReference>
<dbReference type="GO" id="GO:0005506">
    <property type="term" value="F:iron ion binding"/>
    <property type="evidence" value="ECO:0000318"/>
    <property type="project" value="GO_Central"/>
</dbReference>
<dbReference type="GO" id="GO:0016226">
    <property type="term" value="P:iron-sulfur cluster assembly"/>
    <property type="evidence" value="ECO:0000318"/>
    <property type="project" value="GO_Central"/>
</dbReference>
<dbReference type="FunFam" id="2.60.300.12:FF:000002">
    <property type="entry name" value="Iron-sulfur cluster insertion protein ErpA"/>
    <property type="match status" value="1"/>
</dbReference>
<dbReference type="Gene3D" id="2.60.300.12">
    <property type="entry name" value="HesB-like domain"/>
    <property type="match status" value="1"/>
</dbReference>
<dbReference type="HAMAP" id="MF_01380">
    <property type="entry name" value="Fe_S_insert_ErpA"/>
    <property type="match status" value="1"/>
</dbReference>
<dbReference type="InterPro" id="IPR000361">
    <property type="entry name" value="FeS_biogenesis"/>
</dbReference>
<dbReference type="InterPro" id="IPR016092">
    <property type="entry name" value="FeS_cluster_insertion"/>
</dbReference>
<dbReference type="InterPro" id="IPR017870">
    <property type="entry name" value="FeS_cluster_insertion_CS"/>
</dbReference>
<dbReference type="InterPro" id="IPR023063">
    <property type="entry name" value="FeS_cluster_insertion_RrpA"/>
</dbReference>
<dbReference type="InterPro" id="IPR035903">
    <property type="entry name" value="HesB-like_dom_sf"/>
</dbReference>
<dbReference type="NCBIfam" id="TIGR00049">
    <property type="entry name" value="iron-sulfur cluster assembly accessory protein"/>
    <property type="match status" value="1"/>
</dbReference>
<dbReference type="NCBIfam" id="NF010147">
    <property type="entry name" value="PRK13623.1"/>
    <property type="match status" value="1"/>
</dbReference>
<dbReference type="PANTHER" id="PTHR43011">
    <property type="entry name" value="IRON-SULFUR CLUSTER ASSEMBLY 2 HOMOLOG, MITOCHONDRIAL"/>
    <property type="match status" value="1"/>
</dbReference>
<dbReference type="PANTHER" id="PTHR43011:SF1">
    <property type="entry name" value="IRON-SULFUR CLUSTER ASSEMBLY 2 HOMOLOG, MITOCHONDRIAL"/>
    <property type="match status" value="1"/>
</dbReference>
<dbReference type="Pfam" id="PF01521">
    <property type="entry name" value="Fe-S_biosyn"/>
    <property type="match status" value="1"/>
</dbReference>
<dbReference type="SUPFAM" id="SSF89360">
    <property type="entry name" value="HesB-like domain"/>
    <property type="match status" value="1"/>
</dbReference>
<dbReference type="PROSITE" id="PS01152">
    <property type="entry name" value="HESB"/>
    <property type="match status" value="1"/>
</dbReference>
<sequence>MNALAQKTPSPPTLVFTEAAVRKVKGLIDEENNPYLNLRVFITGGGCSGFQYGFTFDEAINSDDLVIEKQLEEEDDDEGGTGQMALVKLLVDPLSLQYLQGAEIDYREDVSGAQFVIRNPNAKTTCGCGSSFAA</sequence>
<proteinExistence type="inferred from homology"/>
<gene>
    <name evidence="1" type="primary">erpA</name>
    <name type="ordered locus">CBU_1878</name>
</gene>
<protein>
    <recommendedName>
        <fullName evidence="1">Iron-sulfur cluster insertion protein ErpA</fullName>
    </recommendedName>
</protein>